<proteinExistence type="evidence at protein level"/>
<keyword id="KW-0007">Acetylation</keyword>
<keyword id="KW-0025">Alternative splicing</keyword>
<keyword id="KW-0101">Branched-chain amino acid catabolism</keyword>
<keyword id="KW-0903">Direct protein sequencing</keyword>
<keyword id="KW-0378">Hydrolase</keyword>
<keyword id="KW-0496">Mitochondrion</keyword>
<keyword id="KW-0597">Phosphoprotein</keyword>
<keyword id="KW-1185">Reference proteome</keyword>
<keyword id="KW-0809">Transit peptide</keyword>
<accession>Q5XIE6</accession>
<name>HIBCH_RAT</name>
<evidence type="ECO:0000250" key="1"/>
<evidence type="ECO:0000250" key="2">
    <source>
        <dbReference type="UniProtKB" id="Q6NVY1"/>
    </source>
</evidence>
<evidence type="ECO:0000250" key="3">
    <source>
        <dbReference type="UniProtKB" id="Q8QZS1"/>
    </source>
</evidence>
<evidence type="ECO:0000269" key="4">
    <source>
    </source>
</evidence>
<evidence type="ECO:0000269" key="5">
    <source>
    </source>
</evidence>
<evidence type="ECO:0000303" key="6">
    <source>
    </source>
</evidence>
<evidence type="ECO:0000305" key="7"/>
<comment type="function">
    <text evidence="1 4">Hydrolyzes 3-hydroxyisobutyryl-CoA (HIBYL-CoA), a saline catabolite. Has high activity toward isobutyryl-CoA. Could be an isobutyryl-CoA dehydrogenase that functions in valine catabolism. Also hydrolyzes 3-hydroxypropanoyl-CoA (By similarity).</text>
</comment>
<comment type="catalytic activity">
    <reaction evidence="4">
        <text>3-hydroxy-2-methylpropanoyl-CoA + H2O = 3-hydroxy-2-methylpropanoate + CoA + H(+)</text>
        <dbReference type="Rhea" id="RHEA:20888"/>
        <dbReference type="ChEBI" id="CHEBI:11805"/>
        <dbReference type="ChEBI" id="CHEBI:15377"/>
        <dbReference type="ChEBI" id="CHEBI:15378"/>
        <dbReference type="ChEBI" id="CHEBI:57287"/>
        <dbReference type="ChEBI" id="CHEBI:57340"/>
        <dbReference type="EC" id="3.1.2.4"/>
    </reaction>
</comment>
<comment type="biophysicochemical properties">
    <kinetics>
        <KM evidence="4">6 uM for 3-hydroxyisobutyryl-CoA</KM>
        <KM evidence="4">25 uM for 3-hydroxypropionyl-CoA</KM>
        <Vmax evidence="4">443.0 umol/min/mg enzyme with 3-hydroxyisobutyryl-CoA as substrate</Vmax>
        <Vmax evidence="4">250.0 umol/min/mg enzyme with 3-hydroxypropionyl-CoA as substrate</Vmax>
    </kinetics>
    <phDependence>
        <text evidence="4">Optimum pH is 7-9 with 3-hydroxyisobutyryl-CoA as substrate and 6 with 3-hydroxypropionyl-CoA as substrate.</text>
    </phDependence>
</comment>
<comment type="pathway">
    <text>Amino-acid degradation; L-valine degradation.</text>
</comment>
<comment type="subcellular location">
    <subcellularLocation>
        <location evidence="5">Mitochondrion</location>
    </subcellularLocation>
</comment>
<comment type="alternative products">
    <event type="alternative splicing"/>
    <isoform>
        <id>Q5XIE6-1</id>
        <name>1</name>
        <sequence type="displayed"/>
    </isoform>
    <isoform>
        <id>Q5XIE6-2</id>
        <name>2</name>
        <sequence type="described" ref="VSP_024781 VSP_024782"/>
    </isoform>
</comment>
<comment type="tissue specificity">
    <text evidence="4">Highest activity in liver, kidney and heart. Low activity in muscle and brain.</text>
</comment>
<comment type="similarity">
    <text evidence="7">Belongs to the enoyl-CoA hydratase/isomerase family.</text>
</comment>
<organism>
    <name type="scientific">Rattus norvegicus</name>
    <name type="common">Rat</name>
    <dbReference type="NCBI Taxonomy" id="10116"/>
    <lineage>
        <taxon>Eukaryota</taxon>
        <taxon>Metazoa</taxon>
        <taxon>Chordata</taxon>
        <taxon>Craniata</taxon>
        <taxon>Vertebrata</taxon>
        <taxon>Euteleostomi</taxon>
        <taxon>Mammalia</taxon>
        <taxon>Eutheria</taxon>
        <taxon>Euarchontoglires</taxon>
        <taxon>Glires</taxon>
        <taxon>Rodentia</taxon>
        <taxon>Myomorpha</taxon>
        <taxon>Muroidea</taxon>
        <taxon>Muridae</taxon>
        <taxon>Murinae</taxon>
        <taxon>Rattus</taxon>
    </lineage>
</organism>
<dbReference type="EC" id="3.1.2.4"/>
<dbReference type="EMBL" id="AABR03068835">
    <property type="status" value="NOT_ANNOTATED_CDS"/>
    <property type="molecule type" value="Genomic_DNA"/>
</dbReference>
<dbReference type="EMBL" id="AABR03067918">
    <property type="status" value="NOT_ANNOTATED_CDS"/>
    <property type="molecule type" value="Genomic_DNA"/>
</dbReference>
<dbReference type="EMBL" id="BC083737">
    <property type="protein sequence ID" value="AAH83737.1"/>
    <property type="molecule type" value="mRNA"/>
</dbReference>
<dbReference type="RefSeq" id="NP_001013130.1">
    <molecule id="Q5XIE6-2"/>
    <property type="nucleotide sequence ID" value="NM_001013112.2"/>
</dbReference>
<dbReference type="RefSeq" id="NP_001385597.1">
    <molecule id="Q5XIE6-1"/>
    <property type="nucleotide sequence ID" value="NM_001398668.1"/>
</dbReference>
<dbReference type="RefSeq" id="XP_006244957.1">
    <property type="nucleotide sequence ID" value="XM_006244895.1"/>
</dbReference>
<dbReference type="SMR" id="Q5XIE6"/>
<dbReference type="FunCoup" id="Q5XIE6">
    <property type="interactions" value="2468"/>
</dbReference>
<dbReference type="STRING" id="10116.ENSRNOP00000032041"/>
<dbReference type="iPTMnet" id="Q5XIE6"/>
<dbReference type="PhosphoSitePlus" id="Q5XIE6"/>
<dbReference type="jPOST" id="Q5XIE6"/>
<dbReference type="PaxDb" id="10116-ENSRNOP00000032041"/>
<dbReference type="Ensembl" id="ENSRNOT00000029677.7">
    <molecule id="Q5XIE6-1"/>
    <property type="protein sequence ID" value="ENSRNOP00000032041.4"/>
    <property type="gene ID" value="ENSRNOG00000028557.7"/>
</dbReference>
<dbReference type="Ensembl" id="ENSRNOT00000040650.4">
    <molecule id="Q5XIE6-2"/>
    <property type="protein sequence ID" value="ENSRNOP00000046370.2"/>
    <property type="gene ID" value="ENSRNOG00000028557.7"/>
</dbReference>
<dbReference type="GeneID" id="301384"/>
<dbReference type="KEGG" id="rno:301384"/>
<dbReference type="UCSC" id="RGD:1308392">
    <molecule id="Q5XIE6-1"/>
    <property type="organism name" value="rat"/>
</dbReference>
<dbReference type="AGR" id="RGD:1308392"/>
<dbReference type="CTD" id="26275"/>
<dbReference type="RGD" id="1308392">
    <property type="gene designation" value="Hibch"/>
</dbReference>
<dbReference type="eggNOG" id="KOG1684">
    <property type="taxonomic scope" value="Eukaryota"/>
</dbReference>
<dbReference type="GeneTree" id="ENSGT00890000139491"/>
<dbReference type="HOGENOM" id="CLU_009834_22_2_1"/>
<dbReference type="InParanoid" id="Q5XIE6"/>
<dbReference type="PhylomeDB" id="Q5XIE6"/>
<dbReference type="TreeFam" id="TF314329"/>
<dbReference type="BioCyc" id="MetaCyc:MONOMER-11699"/>
<dbReference type="Reactome" id="R-RNO-70895">
    <property type="pathway name" value="Branched-chain amino acid catabolism"/>
</dbReference>
<dbReference type="SABIO-RK" id="Q5XIE6"/>
<dbReference type="UniPathway" id="UPA00362"/>
<dbReference type="PRO" id="PR:Q5XIE6"/>
<dbReference type="Proteomes" id="UP000002494">
    <property type="component" value="Chromosome 9"/>
</dbReference>
<dbReference type="Bgee" id="ENSRNOG00000028557">
    <property type="expression patterns" value="Expressed in heart and 20 other cell types or tissues"/>
</dbReference>
<dbReference type="GO" id="GO:0005739">
    <property type="term" value="C:mitochondrion"/>
    <property type="evidence" value="ECO:0000318"/>
    <property type="project" value="GO_Central"/>
</dbReference>
<dbReference type="GO" id="GO:0003860">
    <property type="term" value="F:3-hydroxyisobutyryl-CoA hydrolase activity"/>
    <property type="evidence" value="ECO:0000266"/>
    <property type="project" value="RGD"/>
</dbReference>
<dbReference type="GO" id="GO:0006574">
    <property type="term" value="P:valine catabolic process"/>
    <property type="evidence" value="ECO:0000318"/>
    <property type="project" value="GO_Central"/>
</dbReference>
<dbReference type="CDD" id="cd06558">
    <property type="entry name" value="crotonase-like"/>
    <property type="match status" value="1"/>
</dbReference>
<dbReference type="FunFam" id="3.90.226.10:FF:000026">
    <property type="entry name" value="3-hydroxyisobutyryl-CoA hydrolase, mitochondrial"/>
    <property type="match status" value="1"/>
</dbReference>
<dbReference type="Gene3D" id="3.90.226.10">
    <property type="entry name" value="2-enoyl-CoA Hydratase, Chain A, domain 1"/>
    <property type="match status" value="1"/>
</dbReference>
<dbReference type="InterPro" id="IPR029045">
    <property type="entry name" value="ClpP/crotonase-like_dom_sf"/>
</dbReference>
<dbReference type="InterPro" id="IPR045004">
    <property type="entry name" value="ECH_dom"/>
</dbReference>
<dbReference type="InterPro" id="IPR032259">
    <property type="entry name" value="HIBYL-CoA-H"/>
</dbReference>
<dbReference type="NCBIfam" id="NF004127">
    <property type="entry name" value="PRK05617.1"/>
    <property type="match status" value="1"/>
</dbReference>
<dbReference type="PANTHER" id="PTHR43176:SF3">
    <property type="entry name" value="3-HYDROXYISOBUTYRYL-COA HYDROLASE, MITOCHONDRIAL"/>
    <property type="match status" value="1"/>
</dbReference>
<dbReference type="PANTHER" id="PTHR43176">
    <property type="entry name" value="3-HYDROXYISOBUTYRYL-COA HYDROLASE-RELATED"/>
    <property type="match status" value="1"/>
</dbReference>
<dbReference type="Pfam" id="PF16113">
    <property type="entry name" value="ECH_2"/>
    <property type="match status" value="1"/>
</dbReference>
<dbReference type="SUPFAM" id="SSF52096">
    <property type="entry name" value="ClpP/crotonase"/>
    <property type="match status" value="1"/>
</dbReference>
<sequence length="385" mass="43025">MGQQFVWRLQSRFSSIRRASVILQHLRMSKHTETAEVLLERRGCAGVITLNRPKLLNALSLNMIRQIYPQLKKWERDPDTFLIIIKGAGGKAFCAGGDIKALSEAKKAGQTLSQDLFREEYILNNAIASCQKPYVALIDGITMGGGVGLSVHGQFRVATERSLFAMPETGIGLFPDVGGGYFLPRLQGKLGYFLALTGFRLKGRDVHRAGIATHFVDSEKLHVLEEELLALKSPSAEDVAGVLESYHAKSKMGQDKSIIFEEHMDKINSCFSANTVEQILENLRQDGSPFAMEQIKVINKMSPTSLKITLRQLMEGSTKTLQEVLTMEYRLTQACMEGHDFHEGVRAVLIDKDQTPKWKPADLKDVTDEDLNSYFKSLGSRDLKF</sequence>
<protein>
    <recommendedName>
        <fullName>3-hydroxyisobutyryl-CoA hydrolase, mitochondrial</fullName>
        <ecNumber>3.1.2.4</ecNumber>
    </recommendedName>
    <alternativeName>
        <fullName>3-hydroxyisobutyryl-coenzyme A hydrolase</fullName>
        <shortName>HIB-CoA hydrolase</shortName>
        <shortName>HIBYL-CoA-H</shortName>
    </alternativeName>
</protein>
<feature type="transit peptide" description="Mitochondrion" evidence="5">
    <location>
        <begin position="1"/>
        <end position="32"/>
    </location>
</feature>
<feature type="chain" id="PRO_0000284931" description="3-hydroxyisobutyryl-CoA hydrolase, mitochondrial">
    <location>
        <begin position="33"/>
        <end position="385"/>
    </location>
</feature>
<feature type="binding site" evidence="1">
    <location>
        <position position="120"/>
    </location>
    <ligand>
        <name>substrate</name>
    </ligand>
</feature>
<feature type="binding site" evidence="1">
    <location>
        <position position="145"/>
    </location>
    <ligand>
        <name>substrate</name>
    </ligand>
</feature>
<feature type="binding site" evidence="1">
    <location>
        <position position="168"/>
    </location>
    <ligand>
        <name>substrate</name>
    </ligand>
</feature>
<feature type="binding site" evidence="1">
    <location>
        <position position="176"/>
    </location>
    <ligand>
        <name>substrate</name>
    </ligand>
</feature>
<feature type="modified residue" description="N6-acetyllysine; alternate" evidence="3">
    <location>
        <position position="54"/>
    </location>
</feature>
<feature type="modified residue" description="N6-succinyllysine; alternate" evidence="3">
    <location>
        <position position="54"/>
    </location>
</feature>
<feature type="modified residue" description="N6-acetyllysine; alternate" evidence="2">
    <location>
        <position position="91"/>
    </location>
</feature>
<feature type="modified residue" description="N6-succinyllysine; alternate" evidence="3">
    <location>
        <position position="91"/>
    </location>
</feature>
<feature type="modified residue" description="N6-acetyllysine; alternate" evidence="3">
    <location>
        <position position="100"/>
    </location>
</feature>
<feature type="modified residue" description="N6-succinyllysine; alternate" evidence="3">
    <location>
        <position position="100"/>
    </location>
</feature>
<feature type="modified residue" description="N6-acetyllysine; alternate" evidence="3">
    <location>
        <position position="220"/>
    </location>
</feature>
<feature type="modified residue" description="N6-succinyllysine; alternate" evidence="3">
    <location>
        <position position="220"/>
    </location>
</feature>
<feature type="modified residue" description="Phosphoserine" evidence="2">
    <location>
        <position position="233"/>
    </location>
</feature>
<feature type="modified residue" description="N6-succinyllysine" evidence="3">
    <location>
        <position position="249"/>
    </location>
</feature>
<feature type="modified residue" description="N6-succinyllysine" evidence="3">
    <location>
        <position position="256"/>
    </location>
</feature>
<feature type="modified residue" description="N6-acetyllysine; alternate" evidence="3">
    <location>
        <position position="296"/>
    </location>
</feature>
<feature type="modified residue" description="N6-succinyllysine; alternate" evidence="3">
    <location>
        <position position="296"/>
    </location>
</feature>
<feature type="modified residue" description="N6-succinyllysine" evidence="3">
    <location>
        <position position="300"/>
    </location>
</feature>
<feature type="modified residue" description="N6-acetyllysine; alternate" evidence="3">
    <location>
        <position position="352"/>
    </location>
</feature>
<feature type="modified residue" description="N6-succinyllysine; alternate" evidence="3">
    <location>
        <position position="352"/>
    </location>
</feature>
<feature type="modified residue" description="N6-acetyllysine" evidence="3">
    <location>
        <position position="359"/>
    </location>
</feature>
<feature type="modified residue" description="N6-acetyllysine" evidence="3">
    <location>
        <position position="364"/>
    </location>
</feature>
<feature type="modified residue" description="N6-succinyllysine" evidence="3">
    <location>
        <position position="376"/>
    </location>
</feature>
<feature type="splice variant" id="VSP_024781" description="In isoform 2." evidence="6">
    <original>VINKMSPTSLKITLR</original>
    <variation>FSLTKTRLQNGNQLI</variation>
    <location>
        <begin position="297"/>
        <end position="311"/>
    </location>
</feature>
<feature type="splice variant" id="VSP_024782" description="In isoform 2." evidence="6">
    <location>
        <begin position="312"/>
        <end position="385"/>
    </location>
</feature>
<feature type="sequence conflict" description="In Ref. 3; AA sequence." evidence="7" ref="3">
    <original>G</original>
    <variation>V</variation>
    <location>
        <position position="344"/>
    </location>
</feature>
<reference key="1">
    <citation type="journal article" date="2004" name="Nature">
        <title>Genome sequence of the Brown Norway rat yields insights into mammalian evolution.</title>
        <authorList>
            <person name="Gibbs R.A."/>
            <person name="Weinstock G.M."/>
            <person name="Metzker M.L."/>
            <person name="Muzny D.M."/>
            <person name="Sodergren E.J."/>
            <person name="Scherer S."/>
            <person name="Scott G."/>
            <person name="Steffen D."/>
            <person name="Worley K.C."/>
            <person name="Burch P.E."/>
            <person name="Okwuonu G."/>
            <person name="Hines S."/>
            <person name="Lewis L."/>
            <person name="Deramo C."/>
            <person name="Delgado O."/>
            <person name="Dugan-Rocha S."/>
            <person name="Miner G."/>
            <person name="Morgan M."/>
            <person name="Hawes A."/>
            <person name="Gill R."/>
            <person name="Holt R.A."/>
            <person name="Adams M.D."/>
            <person name="Amanatides P.G."/>
            <person name="Baden-Tillson H."/>
            <person name="Barnstead M."/>
            <person name="Chin S."/>
            <person name="Evans C.A."/>
            <person name="Ferriera S."/>
            <person name="Fosler C."/>
            <person name="Glodek A."/>
            <person name="Gu Z."/>
            <person name="Jennings D."/>
            <person name="Kraft C.L."/>
            <person name="Nguyen T."/>
            <person name="Pfannkoch C.M."/>
            <person name="Sitter C."/>
            <person name="Sutton G.G."/>
            <person name="Venter J.C."/>
            <person name="Woodage T."/>
            <person name="Smith D."/>
            <person name="Lee H.-M."/>
            <person name="Gustafson E."/>
            <person name="Cahill P."/>
            <person name="Kana A."/>
            <person name="Doucette-Stamm L."/>
            <person name="Weinstock K."/>
            <person name="Fechtel K."/>
            <person name="Weiss R.B."/>
            <person name="Dunn D.M."/>
            <person name="Green E.D."/>
            <person name="Blakesley R.W."/>
            <person name="Bouffard G.G."/>
            <person name="De Jong P.J."/>
            <person name="Osoegawa K."/>
            <person name="Zhu B."/>
            <person name="Marra M."/>
            <person name="Schein J."/>
            <person name="Bosdet I."/>
            <person name="Fjell C."/>
            <person name="Jones S."/>
            <person name="Krzywinski M."/>
            <person name="Mathewson C."/>
            <person name="Siddiqui A."/>
            <person name="Wye N."/>
            <person name="McPherson J."/>
            <person name="Zhao S."/>
            <person name="Fraser C.M."/>
            <person name="Shetty J."/>
            <person name="Shatsman S."/>
            <person name="Geer K."/>
            <person name="Chen Y."/>
            <person name="Abramzon S."/>
            <person name="Nierman W.C."/>
            <person name="Havlak P.H."/>
            <person name="Chen R."/>
            <person name="Durbin K.J."/>
            <person name="Egan A."/>
            <person name="Ren Y."/>
            <person name="Song X.-Z."/>
            <person name="Li B."/>
            <person name="Liu Y."/>
            <person name="Qin X."/>
            <person name="Cawley S."/>
            <person name="Cooney A.J."/>
            <person name="D'Souza L.M."/>
            <person name="Martin K."/>
            <person name="Wu J.Q."/>
            <person name="Gonzalez-Garay M.L."/>
            <person name="Jackson A.R."/>
            <person name="Kalafus K.J."/>
            <person name="McLeod M.P."/>
            <person name="Milosavljevic A."/>
            <person name="Virk D."/>
            <person name="Volkov A."/>
            <person name="Wheeler D.A."/>
            <person name="Zhang Z."/>
            <person name="Bailey J.A."/>
            <person name="Eichler E.E."/>
            <person name="Tuzun E."/>
            <person name="Birney E."/>
            <person name="Mongin E."/>
            <person name="Ureta-Vidal A."/>
            <person name="Woodwark C."/>
            <person name="Zdobnov E."/>
            <person name="Bork P."/>
            <person name="Suyama M."/>
            <person name="Torrents D."/>
            <person name="Alexandersson M."/>
            <person name="Trask B.J."/>
            <person name="Young J.M."/>
            <person name="Huang H."/>
            <person name="Wang H."/>
            <person name="Xing H."/>
            <person name="Daniels S."/>
            <person name="Gietzen D."/>
            <person name="Schmidt J."/>
            <person name="Stevens K."/>
            <person name="Vitt U."/>
            <person name="Wingrove J."/>
            <person name="Camara F."/>
            <person name="Mar Alba M."/>
            <person name="Abril J.F."/>
            <person name="Guigo R."/>
            <person name="Smit A."/>
            <person name="Dubchak I."/>
            <person name="Rubin E.M."/>
            <person name="Couronne O."/>
            <person name="Poliakov A."/>
            <person name="Huebner N."/>
            <person name="Ganten D."/>
            <person name="Goesele C."/>
            <person name="Hummel O."/>
            <person name="Kreitler T."/>
            <person name="Lee Y.-A."/>
            <person name="Monti J."/>
            <person name="Schulz H."/>
            <person name="Zimdahl H."/>
            <person name="Himmelbauer H."/>
            <person name="Lehrach H."/>
            <person name="Jacob H.J."/>
            <person name="Bromberg S."/>
            <person name="Gullings-Handley J."/>
            <person name="Jensen-Seaman M.I."/>
            <person name="Kwitek A.E."/>
            <person name="Lazar J."/>
            <person name="Pasko D."/>
            <person name="Tonellato P.J."/>
            <person name="Twigger S."/>
            <person name="Ponting C.P."/>
            <person name="Duarte J.M."/>
            <person name="Rice S."/>
            <person name="Goodstadt L."/>
            <person name="Beatson S.A."/>
            <person name="Emes R.D."/>
            <person name="Winter E.E."/>
            <person name="Webber C."/>
            <person name="Brandt P."/>
            <person name="Nyakatura G."/>
            <person name="Adetobi M."/>
            <person name="Chiaromonte F."/>
            <person name="Elnitski L."/>
            <person name="Eswara P."/>
            <person name="Hardison R.C."/>
            <person name="Hou M."/>
            <person name="Kolbe D."/>
            <person name="Makova K."/>
            <person name="Miller W."/>
            <person name="Nekrutenko A."/>
            <person name="Riemer C."/>
            <person name="Schwartz S."/>
            <person name="Taylor J."/>
            <person name="Yang S."/>
            <person name="Zhang Y."/>
            <person name="Lindpaintner K."/>
            <person name="Andrews T.D."/>
            <person name="Caccamo M."/>
            <person name="Clamp M."/>
            <person name="Clarke L."/>
            <person name="Curwen V."/>
            <person name="Durbin R.M."/>
            <person name="Eyras E."/>
            <person name="Searle S.M."/>
            <person name="Cooper G.M."/>
            <person name="Batzoglou S."/>
            <person name="Brudno M."/>
            <person name="Sidow A."/>
            <person name="Stone E.A."/>
            <person name="Payseur B.A."/>
            <person name="Bourque G."/>
            <person name="Lopez-Otin C."/>
            <person name="Puente X.S."/>
            <person name="Chakrabarti K."/>
            <person name="Chatterji S."/>
            <person name="Dewey C."/>
            <person name="Pachter L."/>
            <person name="Bray N."/>
            <person name="Yap V.B."/>
            <person name="Caspi A."/>
            <person name="Tesler G."/>
            <person name="Pevzner P.A."/>
            <person name="Haussler D."/>
            <person name="Roskin K.M."/>
            <person name="Baertsch R."/>
            <person name="Clawson H."/>
            <person name="Furey T.S."/>
            <person name="Hinrichs A.S."/>
            <person name="Karolchik D."/>
            <person name="Kent W.J."/>
            <person name="Rosenbloom K.R."/>
            <person name="Trumbower H."/>
            <person name="Weirauch M."/>
            <person name="Cooper D.N."/>
            <person name="Stenson P.D."/>
            <person name="Ma B."/>
            <person name="Brent M."/>
            <person name="Arumugam M."/>
            <person name="Shteynberg D."/>
            <person name="Copley R.R."/>
            <person name="Taylor M.S."/>
            <person name="Riethman H."/>
            <person name="Mudunuri U."/>
            <person name="Peterson J."/>
            <person name="Guyer M."/>
            <person name="Felsenfeld A."/>
            <person name="Old S."/>
            <person name="Mockrin S."/>
            <person name="Collins F.S."/>
        </authorList>
    </citation>
    <scope>NUCLEOTIDE SEQUENCE [LARGE SCALE GENOMIC DNA]</scope>
    <source>
        <strain>Brown Norway</strain>
    </source>
</reference>
<reference key="2">
    <citation type="journal article" date="2004" name="Genome Res.">
        <title>The status, quality, and expansion of the NIH full-length cDNA project: the Mammalian Gene Collection (MGC).</title>
        <authorList>
            <consortium name="The MGC Project Team"/>
        </authorList>
    </citation>
    <scope>NUCLEOTIDE SEQUENCE [LARGE SCALE MRNA] (ISOFORM 2)</scope>
    <source>
        <tissue>Heart</tissue>
    </source>
</reference>
<reference key="3">
    <citation type="journal article" date="1996" name="J. Biol. Chem.">
        <title>Primary structure and tissue-specific expression of human beta-hydroxyisobutyryl-coenzyme A hydrolase.</title>
        <authorList>
            <person name="Hawes J.W."/>
            <person name="Jaskiewicz J."/>
            <person name="Shimomura Y."/>
            <person name="Huang B."/>
            <person name="Bunting J."/>
            <person name="Harper E.T."/>
            <person name="Harris R.A."/>
        </authorList>
    </citation>
    <scope>PROTEIN SEQUENCE OF 33-43; 45-56; 167-184; 209-221 AND 337-344</scope>
    <scope>SUBCELLULAR LOCATION</scope>
    <source>
        <tissue>Brain</tissue>
    </source>
</reference>
<reference key="4">
    <citation type="journal article" date="1994" name="J. Biol. Chem.">
        <title>Purification and partial characterization of 3-hydroxyisobutyryl-coenzyme A hydrolase of rat liver.</title>
        <authorList>
            <person name="Shimomura Y."/>
            <person name="Murakami T."/>
            <person name="Fujitsuka N."/>
            <person name="Nakai N."/>
            <person name="Sato Y."/>
            <person name="Sugiyama S."/>
            <person name="Shimomura N."/>
            <person name="Irwin J."/>
            <person name="Hawes J.W."/>
            <person name="Harris R.A."/>
        </authorList>
    </citation>
    <scope>FUNCTION</scope>
    <scope>CATALYTIC ACTIVITY</scope>
    <scope>BIOPHYSICOCHEMICAL PROPERTIES</scope>
    <scope>TISSUE SPECIFICITY</scope>
</reference>
<gene>
    <name type="primary">Hibch</name>
</gene>